<accession>A6TM76</accession>
<gene>
    <name evidence="1" type="primary">trpB</name>
    <name type="ordered locus">Amet_1082</name>
</gene>
<feature type="chain" id="PRO_1000117746" description="Tryptophan synthase beta chain">
    <location>
        <begin position="1"/>
        <end position="400"/>
    </location>
</feature>
<feature type="modified residue" description="N6-(pyridoxal phosphate)lysine" evidence="1">
    <location>
        <position position="90"/>
    </location>
</feature>
<organism>
    <name type="scientific">Alkaliphilus metalliredigens (strain QYMF)</name>
    <dbReference type="NCBI Taxonomy" id="293826"/>
    <lineage>
        <taxon>Bacteria</taxon>
        <taxon>Bacillati</taxon>
        <taxon>Bacillota</taxon>
        <taxon>Clostridia</taxon>
        <taxon>Peptostreptococcales</taxon>
        <taxon>Natronincolaceae</taxon>
        <taxon>Alkaliphilus</taxon>
    </lineage>
</organism>
<comment type="function">
    <text evidence="1">The beta subunit is responsible for the synthesis of L-tryptophan from indole and L-serine.</text>
</comment>
<comment type="catalytic activity">
    <reaction evidence="1">
        <text>(1S,2R)-1-C-(indol-3-yl)glycerol 3-phosphate + L-serine = D-glyceraldehyde 3-phosphate + L-tryptophan + H2O</text>
        <dbReference type="Rhea" id="RHEA:10532"/>
        <dbReference type="ChEBI" id="CHEBI:15377"/>
        <dbReference type="ChEBI" id="CHEBI:33384"/>
        <dbReference type="ChEBI" id="CHEBI:57912"/>
        <dbReference type="ChEBI" id="CHEBI:58866"/>
        <dbReference type="ChEBI" id="CHEBI:59776"/>
        <dbReference type="EC" id="4.2.1.20"/>
    </reaction>
</comment>
<comment type="cofactor">
    <cofactor evidence="1">
        <name>pyridoxal 5'-phosphate</name>
        <dbReference type="ChEBI" id="CHEBI:597326"/>
    </cofactor>
</comment>
<comment type="pathway">
    <text evidence="1">Amino-acid biosynthesis; L-tryptophan biosynthesis; L-tryptophan from chorismate: step 5/5.</text>
</comment>
<comment type="subunit">
    <text evidence="1">Tetramer of two alpha and two beta chains.</text>
</comment>
<comment type="similarity">
    <text evidence="1">Belongs to the TrpB family.</text>
</comment>
<protein>
    <recommendedName>
        <fullName evidence="1">Tryptophan synthase beta chain</fullName>
        <ecNumber evidence="1">4.2.1.20</ecNumber>
    </recommendedName>
</protein>
<keyword id="KW-0028">Amino-acid biosynthesis</keyword>
<keyword id="KW-0057">Aromatic amino acid biosynthesis</keyword>
<keyword id="KW-0456">Lyase</keyword>
<keyword id="KW-0663">Pyridoxal phosphate</keyword>
<keyword id="KW-1185">Reference proteome</keyword>
<keyword id="KW-0822">Tryptophan biosynthesis</keyword>
<dbReference type="EC" id="4.2.1.20" evidence="1"/>
<dbReference type="EMBL" id="CP000724">
    <property type="protein sequence ID" value="ABR47294.1"/>
    <property type="molecule type" value="Genomic_DNA"/>
</dbReference>
<dbReference type="RefSeq" id="WP_012062336.1">
    <property type="nucleotide sequence ID" value="NC_009633.1"/>
</dbReference>
<dbReference type="SMR" id="A6TM76"/>
<dbReference type="STRING" id="293826.Amet_1082"/>
<dbReference type="KEGG" id="amt:Amet_1082"/>
<dbReference type="eggNOG" id="COG0133">
    <property type="taxonomic scope" value="Bacteria"/>
</dbReference>
<dbReference type="HOGENOM" id="CLU_016734_3_1_9"/>
<dbReference type="OrthoDB" id="9766131at2"/>
<dbReference type="UniPathway" id="UPA00035">
    <property type="reaction ID" value="UER00044"/>
</dbReference>
<dbReference type="Proteomes" id="UP000001572">
    <property type="component" value="Chromosome"/>
</dbReference>
<dbReference type="GO" id="GO:0005737">
    <property type="term" value="C:cytoplasm"/>
    <property type="evidence" value="ECO:0007669"/>
    <property type="project" value="TreeGrafter"/>
</dbReference>
<dbReference type="GO" id="GO:0004834">
    <property type="term" value="F:tryptophan synthase activity"/>
    <property type="evidence" value="ECO:0007669"/>
    <property type="project" value="UniProtKB-UniRule"/>
</dbReference>
<dbReference type="CDD" id="cd06446">
    <property type="entry name" value="Trp-synth_B"/>
    <property type="match status" value="1"/>
</dbReference>
<dbReference type="FunFam" id="3.40.50.1100:FF:000001">
    <property type="entry name" value="Tryptophan synthase beta chain"/>
    <property type="match status" value="1"/>
</dbReference>
<dbReference type="FunFam" id="3.40.50.1100:FF:000004">
    <property type="entry name" value="Tryptophan synthase beta chain"/>
    <property type="match status" value="1"/>
</dbReference>
<dbReference type="Gene3D" id="3.40.50.1100">
    <property type="match status" value="2"/>
</dbReference>
<dbReference type="HAMAP" id="MF_00133">
    <property type="entry name" value="Trp_synth_beta"/>
    <property type="match status" value="1"/>
</dbReference>
<dbReference type="InterPro" id="IPR006653">
    <property type="entry name" value="Trp_synth_b_CS"/>
</dbReference>
<dbReference type="InterPro" id="IPR006654">
    <property type="entry name" value="Trp_synth_beta"/>
</dbReference>
<dbReference type="InterPro" id="IPR023026">
    <property type="entry name" value="Trp_synth_beta/beta-like"/>
</dbReference>
<dbReference type="InterPro" id="IPR001926">
    <property type="entry name" value="TrpB-like_PALP"/>
</dbReference>
<dbReference type="InterPro" id="IPR036052">
    <property type="entry name" value="TrpB-like_PALP_sf"/>
</dbReference>
<dbReference type="NCBIfam" id="TIGR00263">
    <property type="entry name" value="trpB"/>
    <property type="match status" value="1"/>
</dbReference>
<dbReference type="PANTHER" id="PTHR48077:SF3">
    <property type="entry name" value="TRYPTOPHAN SYNTHASE"/>
    <property type="match status" value="1"/>
</dbReference>
<dbReference type="PANTHER" id="PTHR48077">
    <property type="entry name" value="TRYPTOPHAN SYNTHASE-RELATED"/>
    <property type="match status" value="1"/>
</dbReference>
<dbReference type="Pfam" id="PF00291">
    <property type="entry name" value="PALP"/>
    <property type="match status" value="1"/>
</dbReference>
<dbReference type="PIRSF" id="PIRSF001413">
    <property type="entry name" value="Trp_syn_beta"/>
    <property type="match status" value="1"/>
</dbReference>
<dbReference type="SUPFAM" id="SSF53686">
    <property type="entry name" value="Tryptophan synthase beta subunit-like PLP-dependent enzymes"/>
    <property type="match status" value="1"/>
</dbReference>
<dbReference type="PROSITE" id="PS00168">
    <property type="entry name" value="TRP_SYNTHASE_BETA"/>
    <property type="match status" value="1"/>
</dbReference>
<evidence type="ECO:0000255" key="1">
    <source>
        <dbReference type="HAMAP-Rule" id="MF_00133"/>
    </source>
</evidence>
<name>TRPB_ALKMQ</name>
<sequence>MMKVKELPKKFGKFGGQFVPETLMNALIELERQFIQTKEDDEFQEMYRYYVREYSGRPTPLYYAENLTKKLGGGKIYLKREDLNHTGAHKINNVIGQVLLARKMKKKRIIAETGAGQHGVATATICAMFDLECVVYMGAEDIERQALNVFKMEMLGAEVVSVTSGTATLKDATNEAIRDWVANVKDTYYVIGSVVGPHPYPTMVRDFQRIIGDEVKEQILEKEGRLPNYLVACVGGGSNAMGLFYPFYEDEAVALYGVEAAGLGVETDQHAATITKGSMGVIHGMMTYLLQDEQGQITPVHSISAGLDYPGIGPEHAYYHHTGRANYVAITDEEALEAFQLLTRLEGIIPALESAHAIAYLMKLAPKTKGDDIIVLNLSGRGDKDIHTISKLLGGNRDDK</sequence>
<proteinExistence type="inferred from homology"/>
<reference key="1">
    <citation type="journal article" date="2016" name="Genome Announc.">
        <title>Complete genome sequence of Alkaliphilus metalliredigens strain QYMF, an alkaliphilic and metal-reducing bacterium isolated from borax-contaminated leachate ponds.</title>
        <authorList>
            <person name="Hwang C."/>
            <person name="Copeland A."/>
            <person name="Lucas S."/>
            <person name="Lapidus A."/>
            <person name="Barry K."/>
            <person name="Detter J.C."/>
            <person name="Glavina Del Rio T."/>
            <person name="Hammon N."/>
            <person name="Israni S."/>
            <person name="Dalin E."/>
            <person name="Tice H."/>
            <person name="Pitluck S."/>
            <person name="Chertkov O."/>
            <person name="Brettin T."/>
            <person name="Bruce D."/>
            <person name="Han C."/>
            <person name="Schmutz J."/>
            <person name="Larimer F."/>
            <person name="Land M.L."/>
            <person name="Hauser L."/>
            <person name="Kyrpides N."/>
            <person name="Mikhailova N."/>
            <person name="Ye Q."/>
            <person name="Zhou J."/>
            <person name="Richardson P."/>
            <person name="Fields M.W."/>
        </authorList>
    </citation>
    <scope>NUCLEOTIDE SEQUENCE [LARGE SCALE GENOMIC DNA]</scope>
    <source>
        <strain>QYMF</strain>
    </source>
</reference>